<organism>
    <name type="scientific">Listeria welshimeri serovar 6b (strain ATCC 35897 / DSM 20650 / CCUG 15529 / CIP 8149 / NCTC 11857 / SLCC 5334 / V8)</name>
    <dbReference type="NCBI Taxonomy" id="386043"/>
    <lineage>
        <taxon>Bacteria</taxon>
        <taxon>Bacillati</taxon>
        <taxon>Bacillota</taxon>
        <taxon>Bacilli</taxon>
        <taxon>Bacillales</taxon>
        <taxon>Listeriaceae</taxon>
        <taxon>Listeria</taxon>
    </lineage>
</organism>
<dbReference type="EC" id="1.2.1.38" evidence="1"/>
<dbReference type="EMBL" id="AM263198">
    <property type="protein sequence ID" value="CAK21022.1"/>
    <property type="molecule type" value="Genomic_DNA"/>
</dbReference>
<dbReference type="RefSeq" id="WP_011702389.1">
    <property type="nucleotide sequence ID" value="NC_008555.1"/>
</dbReference>
<dbReference type="SMR" id="A0AJ40"/>
<dbReference type="STRING" id="386043.lwe1604"/>
<dbReference type="GeneID" id="61189481"/>
<dbReference type="KEGG" id="lwe:lwe1604"/>
<dbReference type="eggNOG" id="COG0002">
    <property type="taxonomic scope" value="Bacteria"/>
</dbReference>
<dbReference type="HOGENOM" id="CLU_006384_0_1_9"/>
<dbReference type="OrthoDB" id="9801289at2"/>
<dbReference type="UniPathway" id="UPA00068">
    <property type="reaction ID" value="UER00108"/>
</dbReference>
<dbReference type="Proteomes" id="UP000000779">
    <property type="component" value="Chromosome"/>
</dbReference>
<dbReference type="GO" id="GO:0005737">
    <property type="term" value="C:cytoplasm"/>
    <property type="evidence" value="ECO:0007669"/>
    <property type="project" value="UniProtKB-SubCell"/>
</dbReference>
<dbReference type="GO" id="GO:0003942">
    <property type="term" value="F:N-acetyl-gamma-glutamyl-phosphate reductase activity"/>
    <property type="evidence" value="ECO:0007669"/>
    <property type="project" value="UniProtKB-UniRule"/>
</dbReference>
<dbReference type="GO" id="GO:0051287">
    <property type="term" value="F:NAD binding"/>
    <property type="evidence" value="ECO:0007669"/>
    <property type="project" value="InterPro"/>
</dbReference>
<dbReference type="GO" id="GO:0070401">
    <property type="term" value="F:NADP+ binding"/>
    <property type="evidence" value="ECO:0007669"/>
    <property type="project" value="InterPro"/>
</dbReference>
<dbReference type="GO" id="GO:0006526">
    <property type="term" value="P:L-arginine biosynthetic process"/>
    <property type="evidence" value="ECO:0007669"/>
    <property type="project" value="UniProtKB-UniRule"/>
</dbReference>
<dbReference type="CDD" id="cd23934">
    <property type="entry name" value="AGPR_1_C"/>
    <property type="match status" value="1"/>
</dbReference>
<dbReference type="CDD" id="cd17895">
    <property type="entry name" value="AGPR_1_N"/>
    <property type="match status" value="1"/>
</dbReference>
<dbReference type="FunFam" id="3.30.360.10:FF:000014">
    <property type="entry name" value="N-acetyl-gamma-glutamyl-phosphate reductase"/>
    <property type="match status" value="1"/>
</dbReference>
<dbReference type="Gene3D" id="3.30.360.10">
    <property type="entry name" value="Dihydrodipicolinate Reductase, domain 2"/>
    <property type="match status" value="1"/>
</dbReference>
<dbReference type="Gene3D" id="3.40.50.720">
    <property type="entry name" value="NAD(P)-binding Rossmann-like Domain"/>
    <property type="match status" value="1"/>
</dbReference>
<dbReference type="HAMAP" id="MF_00150">
    <property type="entry name" value="ArgC_type1"/>
    <property type="match status" value="1"/>
</dbReference>
<dbReference type="InterPro" id="IPR023013">
    <property type="entry name" value="AGPR_AS"/>
</dbReference>
<dbReference type="InterPro" id="IPR000706">
    <property type="entry name" value="AGPR_type-1"/>
</dbReference>
<dbReference type="InterPro" id="IPR036291">
    <property type="entry name" value="NAD(P)-bd_dom_sf"/>
</dbReference>
<dbReference type="InterPro" id="IPR050085">
    <property type="entry name" value="NAGSA_dehydrogenase"/>
</dbReference>
<dbReference type="InterPro" id="IPR000534">
    <property type="entry name" value="Semialdehyde_DH_NAD-bd"/>
</dbReference>
<dbReference type="NCBIfam" id="TIGR01850">
    <property type="entry name" value="argC"/>
    <property type="match status" value="1"/>
</dbReference>
<dbReference type="PANTHER" id="PTHR32338:SF10">
    <property type="entry name" value="N-ACETYL-GAMMA-GLUTAMYL-PHOSPHATE REDUCTASE, CHLOROPLASTIC-RELATED"/>
    <property type="match status" value="1"/>
</dbReference>
<dbReference type="PANTHER" id="PTHR32338">
    <property type="entry name" value="N-ACETYL-GAMMA-GLUTAMYL-PHOSPHATE REDUCTASE, CHLOROPLASTIC-RELATED-RELATED"/>
    <property type="match status" value="1"/>
</dbReference>
<dbReference type="Pfam" id="PF01118">
    <property type="entry name" value="Semialdhyde_dh"/>
    <property type="match status" value="1"/>
</dbReference>
<dbReference type="Pfam" id="PF22698">
    <property type="entry name" value="Semialdhyde_dhC_1"/>
    <property type="match status" value="1"/>
</dbReference>
<dbReference type="SMART" id="SM00859">
    <property type="entry name" value="Semialdhyde_dh"/>
    <property type="match status" value="1"/>
</dbReference>
<dbReference type="SUPFAM" id="SSF55347">
    <property type="entry name" value="Glyceraldehyde-3-phosphate dehydrogenase-like, C-terminal domain"/>
    <property type="match status" value="1"/>
</dbReference>
<dbReference type="SUPFAM" id="SSF51735">
    <property type="entry name" value="NAD(P)-binding Rossmann-fold domains"/>
    <property type="match status" value="1"/>
</dbReference>
<dbReference type="PROSITE" id="PS01224">
    <property type="entry name" value="ARGC"/>
    <property type="match status" value="1"/>
</dbReference>
<sequence>MKVSIIGATGYSGLELIRLIQQHSSVDIATLHSFSNQTNLLSNLYPHLKNLEASPLEKINPKDIIEKSETVFLATPSGISKDIALPYIDAGLNVIDLSGDFRLKNSQLYEKWYEKSAPLENYLMRAEYGLAEFRENKESTFIANPGCYATATLLGLAPLVKKQLIEPTSIIVDAKSGISGAGKVPSTSTHFTETNENMTLYKMNSHQHIPEIMQQLTKWDESIPAIQFSTSLIPITRGIFTTIYVRPKKPIAWEELHKLYESTYENAPFVRIQKENVYPTVKQVTASNYCDIGLAYNEITNVITIVSVIDNLVKGAAGQAIQNLNIMANFAENDGLGFIPVYP</sequence>
<proteinExistence type="inferred from homology"/>
<comment type="function">
    <text evidence="1">Catalyzes the NADPH-dependent reduction of N-acetyl-5-glutamyl phosphate to yield N-acetyl-L-glutamate 5-semialdehyde.</text>
</comment>
<comment type="catalytic activity">
    <reaction evidence="1">
        <text>N-acetyl-L-glutamate 5-semialdehyde + phosphate + NADP(+) = N-acetyl-L-glutamyl 5-phosphate + NADPH + H(+)</text>
        <dbReference type="Rhea" id="RHEA:21588"/>
        <dbReference type="ChEBI" id="CHEBI:15378"/>
        <dbReference type="ChEBI" id="CHEBI:29123"/>
        <dbReference type="ChEBI" id="CHEBI:43474"/>
        <dbReference type="ChEBI" id="CHEBI:57783"/>
        <dbReference type="ChEBI" id="CHEBI:57936"/>
        <dbReference type="ChEBI" id="CHEBI:58349"/>
        <dbReference type="EC" id="1.2.1.38"/>
    </reaction>
</comment>
<comment type="pathway">
    <text evidence="1">Amino-acid biosynthesis; L-arginine biosynthesis; N(2)-acetyl-L-ornithine from L-glutamate: step 3/4.</text>
</comment>
<comment type="subcellular location">
    <subcellularLocation>
        <location evidence="1">Cytoplasm</location>
    </subcellularLocation>
</comment>
<comment type="similarity">
    <text evidence="1">Belongs to the NAGSA dehydrogenase family. Type 1 subfamily.</text>
</comment>
<reference key="1">
    <citation type="journal article" date="2006" name="J. Bacteriol.">
        <title>Whole-genome sequence of Listeria welshimeri reveals common steps in genome reduction with Listeria innocua as compared to Listeria monocytogenes.</title>
        <authorList>
            <person name="Hain T."/>
            <person name="Steinweg C."/>
            <person name="Kuenne C.T."/>
            <person name="Billion A."/>
            <person name="Ghai R."/>
            <person name="Chatterjee S.S."/>
            <person name="Domann E."/>
            <person name="Kaerst U."/>
            <person name="Goesmann A."/>
            <person name="Bekel T."/>
            <person name="Bartels D."/>
            <person name="Kaiser O."/>
            <person name="Meyer F."/>
            <person name="Puehler A."/>
            <person name="Weisshaar B."/>
            <person name="Wehland J."/>
            <person name="Liang C."/>
            <person name="Dandekar T."/>
            <person name="Lampidis R."/>
            <person name="Kreft J."/>
            <person name="Goebel W."/>
            <person name="Chakraborty T."/>
        </authorList>
    </citation>
    <scope>NUCLEOTIDE SEQUENCE [LARGE SCALE GENOMIC DNA]</scope>
    <source>
        <strain>ATCC 35897 / DSM 20650 / CCUG 15529 / CIP 8149 / NCTC 11857 / SLCC 5334 / V8</strain>
    </source>
</reference>
<protein>
    <recommendedName>
        <fullName evidence="1">N-acetyl-gamma-glutamyl-phosphate reductase</fullName>
        <shortName evidence="1">AGPR</shortName>
        <ecNumber evidence="1">1.2.1.38</ecNumber>
    </recommendedName>
    <alternativeName>
        <fullName evidence="1">N-acetyl-glutamate semialdehyde dehydrogenase</fullName>
        <shortName evidence="1">NAGSA dehydrogenase</shortName>
    </alternativeName>
</protein>
<name>ARGC_LISW6</name>
<accession>A0AJ40</accession>
<feature type="chain" id="PRO_1000011005" description="N-acetyl-gamma-glutamyl-phosphate reductase">
    <location>
        <begin position="1"/>
        <end position="343"/>
    </location>
</feature>
<feature type="active site" evidence="1">
    <location>
        <position position="147"/>
    </location>
</feature>
<evidence type="ECO:0000255" key="1">
    <source>
        <dbReference type="HAMAP-Rule" id="MF_00150"/>
    </source>
</evidence>
<keyword id="KW-0028">Amino-acid biosynthesis</keyword>
<keyword id="KW-0055">Arginine biosynthesis</keyword>
<keyword id="KW-0963">Cytoplasm</keyword>
<keyword id="KW-0521">NADP</keyword>
<keyword id="KW-0560">Oxidoreductase</keyword>
<gene>
    <name evidence="1" type="primary">argC</name>
    <name type="ordered locus">lwe1604</name>
</gene>